<gene>
    <name evidence="1" type="primary">tyrS</name>
    <name type="ordered locus">RT0544</name>
</gene>
<name>SYY_RICTY</name>
<sequence>MTFIEEFIYKGYLHQCTDLDQLTAITQEVKIAAYIGFDCTATSLHIGSLMQIMILRLLQKHGHTPIVIIGGGTSKIGDPSGKEVTRKALTQEDIKRNTAGIKKSLSKFIKFGKDQGDAIILDNAEWLDSLNYLDFLRDFGRHFSVNRMLTMDSVKLRLERSHHLSFLELNYMLLQAYDFYYLSKHYNCILQLGGSDQWGNIVIGADLIRRISGKEVFGMTTPLLTTASGAKMGKTAAGAVWLNEDLLSPYDYYQYWRNCEDADVIRFAKLYSELDIIELNKFEHLVSEDINAAKKQLAYELTKLCHGERLAKLALETAVRIFEQGDIDENLHTFILAPEILQAGISAYKLFYNVNLARSKSEARKIIRGKGAKINDQLVEDENMTIDTNFLLDKKVIKLSVGKKRHILVKV</sequence>
<keyword id="KW-0030">Aminoacyl-tRNA synthetase</keyword>
<keyword id="KW-0067">ATP-binding</keyword>
<keyword id="KW-0963">Cytoplasm</keyword>
<keyword id="KW-0436">Ligase</keyword>
<keyword id="KW-0547">Nucleotide-binding</keyword>
<keyword id="KW-0648">Protein biosynthesis</keyword>
<keyword id="KW-0694">RNA-binding</keyword>
<feature type="chain" id="PRO_0000234761" description="Tyrosine--tRNA ligase">
    <location>
        <begin position="1"/>
        <end position="411"/>
    </location>
</feature>
<feature type="domain" description="S4 RNA-binding" evidence="1">
    <location>
        <begin position="345"/>
        <end position="411"/>
    </location>
</feature>
<feature type="short sequence motif" description="'HIGH' region">
    <location>
        <begin position="39"/>
        <end position="48"/>
    </location>
</feature>
<feature type="short sequence motif" description="'KMSKS' region">
    <location>
        <begin position="231"/>
        <end position="235"/>
    </location>
</feature>
<feature type="binding site" evidence="1">
    <location>
        <position position="34"/>
    </location>
    <ligand>
        <name>L-tyrosine</name>
        <dbReference type="ChEBI" id="CHEBI:58315"/>
    </ligand>
</feature>
<feature type="binding site" evidence="1">
    <location>
        <position position="171"/>
    </location>
    <ligand>
        <name>L-tyrosine</name>
        <dbReference type="ChEBI" id="CHEBI:58315"/>
    </ligand>
</feature>
<feature type="binding site" evidence="1">
    <location>
        <position position="175"/>
    </location>
    <ligand>
        <name>L-tyrosine</name>
        <dbReference type="ChEBI" id="CHEBI:58315"/>
    </ligand>
</feature>
<feature type="binding site" evidence="1">
    <location>
        <position position="234"/>
    </location>
    <ligand>
        <name>ATP</name>
        <dbReference type="ChEBI" id="CHEBI:30616"/>
    </ligand>
</feature>
<dbReference type="EC" id="6.1.1.1" evidence="1"/>
<dbReference type="EMBL" id="AE017197">
    <property type="protein sequence ID" value="AAU04013.1"/>
    <property type="molecule type" value="Genomic_DNA"/>
</dbReference>
<dbReference type="RefSeq" id="WP_011190994.1">
    <property type="nucleotide sequence ID" value="NC_006142.1"/>
</dbReference>
<dbReference type="SMR" id="Q68WH9"/>
<dbReference type="KEGG" id="rty:RT0544"/>
<dbReference type="eggNOG" id="COG0162">
    <property type="taxonomic scope" value="Bacteria"/>
</dbReference>
<dbReference type="HOGENOM" id="CLU_024003_0_3_5"/>
<dbReference type="OrthoDB" id="9804243at2"/>
<dbReference type="Proteomes" id="UP000000604">
    <property type="component" value="Chromosome"/>
</dbReference>
<dbReference type="GO" id="GO:0005829">
    <property type="term" value="C:cytosol"/>
    <property type="evidence" value="ECO:0007669"/>
    <property type="project" value="TreeGrafter"/>
</dbReference>
<dbReference type="GO" id="GO:0005524">
    <property type="term" value="F:ATP binding"/>
    <property type="evidence" value="ECO:0007669"/>
    <property type="project" value="UniProtKB-UniRule"/>
</dbReference>
<dbReference type="GO" id="GO:0003723">
    <property type="term" value="F:RNA binding"/>
    <property type="evidence" value="ECO:0007669"/>
    <property type="project" value="UniProtKB-KW"/>
</dbReference>
<dbReference type="GO" id="GO:0004831">
    <property type="term" value="F:tyrosine-tRNA ligase activity"/>
    <property type="evidence" value="ECO:0007669"/>
    <property type="project" value="UniProtKB-UniRule"/>
</dbReference>
<dbReference type="GO" id="GO:0006437">
    <property type="term" value="P:tyrosyl-tRNA aminoacylation"/>
    <property type="evidence" value="ECO:0007669"/>
    <property type="project" value="UniProtKB-UniRule"/>
</dbReference>
<dbReference type="CDD" id="cd00165">
    <property type="entry name" value="S4"/>
    <property type="match status" value="1"/>
</dbReference>
<dbReference type="CDD" id="cd00805">
    <property type="entry name" value="TyrRS_core"/>
    <property type="match status" value="1"/>
</dbReference>
<dbReference type="Gene3D" id="3.40.50.620">
    <property type="entry name" value="HUPs"/>
    <property type="match status" value="1"/>
</dbReference>
<dbReference type="Gene3D" id="3.10.290.10">
    <property type="entry name" value="RNA-binding S4 domain"/>
    <property type="match status" value="1"/>
</dbReference>
<dbReference type="Gene3D" id="1.10.240.10">
    <property type="entry name" value="Tyrosyl-Transfer RNA Synthetase"/>
    <property type="match status" value="1"/>
</dbReference>
<dbReference type="HAMAP" id="MF_02006">
    <property type="entry name" value="Tyr_tRNA_synth_type1"/>
    <property type="match status" value="1"/>
</dbReference>
<dbReference type="InterPro" id="IPR002305">
    <property type="entry name" value="aa-tRNA-synth_Ic"/>
</dbReference>
<dbReference type="InterPro" id="IPR014729">
    <property type="entry name" value="Rossmann-like_a/b/a_fold"/>
</dbReference>
<dbReference type="InterPro" id="IPR036986">
    <property type="entry name" value="S4_RNA-bd_sf"/>
</dbReference>
<dbReference type="InterPro" id="IPR002307">
    <property type="entry name" value="Tyr-tRNA-ligase"/>
</dbReference>
<dbReference type="InterPro" id="IPR024088">
    <property type="entry name" value="Tyr-tRNA-ligase_bac-type"/>
</dbReference>
<dbReference type="InterPro" id="IPR024107">
    <property type="entry name" value="Tyr-tRNA-ligase_bac_1"/>
</dbReference>
<dbReference type="NCBIfam" id="TIGR00234">
    <property type="entry name" value="tyrS"/>
    <property type="match status" value="1"/>
</dbReference>
<dbReference type="PANTHER" id="PTHR11766:SF0">
    <property type="entry name" value="TYROSINE--TRNA LIGASE, MITOCHONDRIAL"/>
    <property type="match status" value="1"/>
</dbReference>
<dbReference type="PANTHER" id="PTHR11766">
    <property type="entry name" value="TYROSYL-TRNA SYNTHETASE"/>
    <property type="match status" value="1"/>
</dbReference>
<dbReference type="Pfam" id="PF00579">
    <property type="entry name" value="tRNA-synt_1b"/>
    <property type="match status" value="1"/>
</dbReference>
<dbReference type="PRINTS" id="PR01040">
    <property type="entry name" value="TRNASYNTHTYR"/>
</dbReference>
<dbReference type="SUPFAM" id="SSF55174">
    <property type="entry name" value="Alpha-L RNA-binding motif"/>
    <property type="match status" value="1"/>
</dbReference>
<dbReference type="SUPFAM" id="SSF52374">
    <property type="entry name" value="Nucleotidylyl transferase"/>
    <property type="match status" value="1"/>
</dbReference>
<dbReference type="PROSITE" id="PS50889">
    <property type="entry name" value="S4"/>
    <property type="match status" value="1"/>
</dbReference>
<protein>
    <recommendedName>
        <fullName evidence="1">Tyrosine--tRNA ligase</fullName>
        <ecNumber evidence="1">6.1.1.1</ecNumber>
    </recommendedName>
    <alternativeName>
        <fullName evidence="1">Tyrosyl-tRNA synthetase</fullName>
        <shortName evidence="1">TyrRS</shortName>
    </alternativeName>
</protein>
<evidence type="ECO:0000255" key="1">
    <source>
        <dbReference type="HAMAP-Rule" id="MF_02006"/>
    </source>
</evidence>
<comment type="function">
    <text evidence="1">Catalyzes the attachment of tyrosine to tRNA(Tyr) in a two-step reaction: tyrosine is first activated by ATP to form Tyr-AMP and then transferred to the acceptor end of tRNA(Tyr).</text>
</comment>
<comment type="catalytic activity">
    <reaction evidence="1">
        <text>tRNA(Tyr) + L-tyrosine + ATP = L-tyrosyl-tRNA(Tyr) + AMP + diphosphate + H(+)</text>
        <dbReference type="Rhea" id="RHEA:10220"/>
        <dbReference type="Rhea" id="RHEA-COMP:9706"/>
        <dbReference type="Rhea" id="RHEA-COMP:9707"/>
        <dbReference type="ChEBI" id="CHEBI:15378"/>
        <dbReference type="ChEBI" id="CHEBI:30616"/>
        <dbReference type="ChEBI" id="CHEBI:33019"/>
        <dbReference type="ChEBI" id="CHEBI:58315"/>
        <dbReference type="ChEBI" id="CHEBI:78442"/>
        <dbReference type="ChEBI" id="CHEBI:78536"/>
        <dbReference type="ChEBI" id="CHEBI:456215"/>
        <dbReference type="EC" id="6.1.1.1"/>
    </reaction>
</comment>
<comment type="subunit">
    <text evidence="1">Homodimer.</text>
</comment>
<comment type="subcellular location">
    <subcellularLocation>
        <location evidence="1">Cytoplasm</location>
    </subcellularLocation>
</comment>
<comment type="similarity">
    <text evidence="1">Belongs to the class-I aminoacyl-tRNA synthetase family. TyrS type 1 subfamily.</text>
</comment>
<reference key="1">
    <citation type="journal article" date="2004" name="J. Bacteriol.">
        <title>Complete genome sequence of Rickettsia typhi and comparison with sequences of other Rickettsiae.</title>
        <authorList>
            <person name="McLeod M.P."/>
            <person name="Qin X."/>
            <person name="Karpathy S.E."/>
            <person name="Gioia J."/>
            <person name="Highlander S.K."/>
            <person name="Fox G.E."/>
            <person name="McNeill T.Z."/>
            <person name="Jiang H."/>
            <person name="Muzny D."/>
            <person name="Jacob L.S."/>
            <person name="Hawes A.C."/>
            <person name="Sodergren E."/>
            <person name="Gill R."/>
            <person name="Hume J."/>
            <person name="Morgan M."/>
            <person name="Fan G."/>
            <person name="Amin A.G."/>
            <person name="Gibbs R.A."/>
            <person name="Hong C."/>
            <person name="Yu X.-J."/>
            <person name="Walker D.H."/>
            <person name="Weinstock G.M."/>
        </authorList>
    </citation>
    <scope>NUCLEOTIDE SEQUENCE [LARGE SCALE GENOMIC DNA]</scope>
    <source>
        <strain>ATCC VR-144 / Wilmington</strain>
    </source>
</reference>
<proteinExistence type="inferred from homology"/>
<accession>Q68WH9</accession>
<organism>
    <name type="scientific">Rickettsia typhi (strain ATCC VR-144 / Wilmington)</name>
    <dbReference type="NCBI Taxonomy" id="257363"/>
    <lineage>
        <taxon>Bacteria</taxon>
        <taxon>Pseudomonadati</taxon>
        <taxon>Pseudomonadota</taxon>
        <taxon>Alphaproteobacteria</taxon>
        <taxon>Rickettsiales</taxon>
        <taxon>Rickettsiaceae</taxon>
        <taxon>Rickettsieae</taxon>
        <taxon>Rickettsia</taxon>
        <taxon>typhus group</taxon>
    </lineage>
</organism>